<protein>
    <recommendedName>
        <fullName evidence="4">Type IV pilus inner membrane component PilM</fullName>
    </recommendedName>
</protein>
<proteinExistence type="evidence at protein level"/>
<feature type="chain" id="PRO_0000450556" description="Type IV pilus inner membrane component PilM">
    <location>
        <begin position="1"/>
        <end position="354"/>
    </location>
</feature>
<feature type="binding site" evidence="3 5">
    <location>
        <begin position="18"/>
        <end position="23"/>
    </location>
    <ligand>
        <name>ATP</name>
        <dbReference type="ChEBI" id="CHEBI:30616"/>
    </ligand>
</feature>
<feature type="binding site" evidence="3 7">
    <location>
        <position position="112"/>
    </location>
    <ligand>
        <name>Mg(2+)</name>
        <dbReference type="ChEBI" id="CHEBI:18420"/>
    </ligand>
</feature>
<feature type="binding site" evidence="3 7">
    <location>
        <position position="115"/>
    </location>
    <ligand>
        <name>Mg(2+)</name>
        <dbReference type="ChEBI" id="CHEBI:18420"/>
    </ligand>
</feature>
<feature type="binding site" evidence="3 5">
    <location>
        <begin position="202"/>
        <end position="203"/>
    </location>
    <ligand>
        <name>ATP</name>
        <dbReference type="ChEBI" id="CHEBI:30616"/>
    </ligand>
</feature>
<feature type="binding site" evidence="3 5">
    <location>
        <position position="247"/>
    </location>
    <ligand>
        <name>ATP</name>
        <dbReference type="ChEBI" id="CHEBI:30616"/>
    </ligand>
</feature>
<feature type="binding site" evidence="3 5">
    <location>
        <position position="296"/>
    </location>
    <ligand>
        <name>ATP</name>
        <dbReference type="ChEBI" id="CHEBI:30616"/>
    </ligand>
</feature>
<feature type="strand" evidence="8">
    <location>
        <begin position="13"/>
        <end position="17"/>
    </location>
</feature>
<feature type="strand" evidence="8">
    <location>
        <begin position="19"/>
        <end position="32"/>
    </location>
</feature>
<feature type="strand" evidence="8">
    <location>
        <begin position="34"/>
        <end position="43"/>
    </location>
</feature>
<feature type="strand" evidence="8">
    <location>
        <begin position="48"/>
        <end position="50"/>
    </location>
</feature>
<feature type="helix" evidence="8">
    <location>
        <begin position="57"/>
        <end position="71"/>
    </location>
</feature>
<feature type="strand" evidence="8">
    <location>
        <begin position="77"/>
        <end position="82"/>
    </location>
</feature>
<feature type="helix" evidence="9">
    <location>
        <begin position="84"/>
        <end position="86"/>
    </location>
</feature>
<feature type="strand" evidence="8">
    <location>
        <begin position="88"/>
        <end position="97"/>
    </location>
</feature>
<feature type="helix" evidence="8">
    <location>
        <begin position="100"/>
        <end position="111"/>
    </location>
</feature>
<feature type="turn" evidence="8">
    <location>
        <begin position="112"/>
        <end position="114"/>
    </location>
</feature>
<feature type="helix" evidence="8">
    <location>
        <begin position="119"/>
        <end position="121"/>
    </location>
</feature>
<feature type="strand" evidence="8">
    <location>
        <begin position="122"/>
        <end position="127"/>
    </location>
</feature>
<feature type="strand" evidence="8">
    <location>
        <begin position="129"/>
        <end position="131"/>
    </location>
</feature>
<feature type="strand" evidence="8">
    <location>
        <begin position="138"/>
        <end position="147"/>
    </location>
</feature>
<feature type="helix" evidence="8">
    <location>
        <begin position="148"/>
        <end position="160"/>
    </location>
</feature>
<feature type="strand" evidence="8">
    <location>
        <begin position="164"/>
        <end position="170"/>
    </location>
</feature>
<feature type="helix" evidence="8">
    <location>
        <begin position="171"/>
        <end position="179"/>
    </location>
</feature>
<feature type="helix" evidence="8">
    <location>
        <begin position="180"/>
        <end position="182"/>
    </location>
</feature>
<feature type="turn" evidence="8">
    <location>
        <begin position="183"/>
        <end position="185"/>
    </location>
</feature>
<feature type="helix" evidence="8">
    <location>
        <begin position="190"/>
        <end position="192"/>
    </location>
</feature>
<feature type="strand" evidence="8">
    <location>
        <begin position="194"/>
        <end position="200"/>
    </location>
</feature>
<feature type="strand" evidence="8">
    <location>
        <begin position="205"/>
        <end position="211"/>
    </location>
</feature>
<feature type="strand" evidence="8">
    <location>
        <begin position="214"/>
        <end position="222"/>
    </location>
</feature>
<feature type="helix" evidence="8">
    <location>
        <begin position="226"/>
        <end position="236"/>
    </location>
</feature>
<feature type="turn" evidence="8">
    <location>
        <begin position="246"/>
        <end position="248"/>
    </location>
</feature>
<feature type="helix" evidence="8">
    <location>
        <begin position="256"/>
        <end position="259"/>
    </location>
</feature>
<feature type="helix" evidence="8">
    <location>
        <begin position="261"/>
        <end position="280"/>
    </location>
</feature>
<feature type="strand" evidence="10">
    <location>
        <begin position="282"/>
        <end position="284"/>
    </location>
</feature>
<feature type="strand" evidence="8">
    <location>
        <begin position="289"/>
        <end position="295"/>
    </location>
</feature>
<feature type="helix" evidence="8">
    <location>
        <begin position="296"/>
        <end position="299"/>
    </location>
</feature>
<feature type="helix" evidence="8">
    <location>
        <begin position="303"/>
        <end position="311"/>
    </location>
</feature>
<feature type="strand" evidence="8">
    <location>
        <begin position="315"/>
        <end position="317"/>
    </location>
</feature>
<feature type="turn" evidence="8">
    <location>
        <begin position="320"/>
        <end position="323"/>
    </location>
</feature>
<feature type="helix" evidence="8">
    <location>
        <begin position="332"/>
        <end position="338"/>
    </location>
</feature>
<feature type="helix" evidence="8">
    <location>
        <begin position="339"/>
        <end position="342"/>
    </location>
</feature>
<feature type="helix" evidence="8">
    <location>
        <begin position="343"/>
        <end position="349"/>
    </location>
</feature>
<feature type="helix" evidence="8">
    <location>
        <begin position="350"/>
        <end position="352"/>
    </location>
</feature>
<evidence type="ECO:0000269" key="1">
    <source>
    </source>
</evidence>
<evidence type="ECO:0000269" key="2">
    <source>
    </source>
</evidence>
<evidence type="ECO:0000269" key="3">
    <source>
    </source>
</evidence>
<evidence type="ECO:0000303" key="4">
    <source>
    </source>
</evidence>
<evidence type="ECO:0007744" key="5">
    <source>
        <dbReference type="PDB" id="5EOU"/>
    </source>
</evidence>
<evidence type="ECO:0007744" key="6">
    <source>
        <dbReference type="PDB" id="5EOX"/>
    </source>
</evidence>
<evidence type="ECO:0007744" key="7">
    <source>
        <dbReference type="PDB" id="5EOY"/>
    </source>
</evidence>
<evidence type="ECO:0007829" key="8">
    <source>
        <dbReference type="PDB" id="5EOU"/>
    </source>
</evidence>
<evidence type="ECO:0007829" key="9">
    <source>
        <dbReference type="PDB" id="5EOX"/>
    </source>
</evidence>
<evidence type="ECO:0007829" key="10">
    <source>
        <dbReference type="PDB" id="5EQ6"/>
    </source>
</evidence>
<dbReference type="EMBL" id="AE004091">
    <property type="protein sequence ID" value="AAG08429.1"/>
    <property type="molecule type" value="Genomic_DNA"/>
</dbReference>
<dbReference type="PIR" id="S77726">
    <property type="entry name" value="S77726"/>
</dbReference>
<dbReference type="RefSeq" id="NP_253731.1">
    <property type="nucleotide sequence ID" value="NC_002516.2"/>
</dbReference>
<dbReference type="RefSeq" id="WP_003110888.1">
    <property type="nucleotide sequence ID" value="NZ_QZGE01000002.1"/>
</dbReference>
<dbReference type="PDB" id="5EOU">
    <property type="method" value="X-ray"/>
    <property type="resolution" value="2.40 A"/>
    <property type="chains" value="A/B=1-354"/>
</dbReference>
<dbReference type="PDB" id="5EOX">
    <property type="method" value="X-ray"/>
    <property type="resolution" value="2.40 A"/>
    <property type="chains" value="A/B=1-354"/>
</dbReference>
<dbReference type="PDB" id="5EOY">
    <property type="method" value="X-ray"/>
    <property type="resolution" value="2.50 A"/>
    <property type="chains" value="A/B=1-354"/>
</dbReference>
<dbReference type="PDB" id="5EQ6">
    <property type="method" value="X-ray"/>
    <property type="resolution" value="3.50 A"/>
    <property type="chains" value="A/B=1-354"/>
</dbReference>
<dbReference type="PDBsum" id="5EOU"/>
<dbReference type="PDBsum" id="5EOX"/>
<dbReference type="PDBsum" id="5EOY"/>
<dbReference type="PDBsum" id="5EQ6"/>
<dbReference type="SMR" id="G3XD28"/>
<dbReference type="STRING" id="208964.PA5044"/>
<dbReference type="PaxDb" id="208964-PA5044"/>
<dbReference type="DNASU" id="881162"/>
<dbReference type="GeneID" id="77223581"/>
<dbReference type="GeneID" id="881162"/>
<dbReference type="KEGG" id="pae:PA5044"/>
<dbReference type="PATRIC" id="fig|208964.12.peg.5288"/>
<dbReference type="PseudoCAP" id="PA5044"/>
<dbReference type="HOGENOM" id="CLU_050686_1_0_6"/>
<dbReference type="InParanoid" id="G3XD28"/>
<dbReference type="OrthoDB" id="9773403at2"/>
<dbReference type="PhylomeDB" id="G3XD28"/>
<dbReference type="Proteomes" id="UP000002438">
    <property type="component" value="Chromosome"/>
</dbReference>
<dbReference type="GO" id="GO:0005737">
    <property type="term" value="C:cytoplasm"/>
    <property type="evidence" value="ECO:0007669"/>
    <property type="project" value="UniProtKB-SubCell"/>
</dbReference>
<dbReference type="GO" id="GO:0044096">
    <property type="term" value="C:type IV pilus"/>
    <property type="evidence" value="ECO:0000315"/>
    <property type="project" value="PseudoCAP"/>
</dbReference>
<dbReference type="GO" id="GO:0005524">
    <property type="term" value="F:ATP binding"/>
    <property type="evidence" value="ECO:0007669"/>
    <property type="project" value="UniProtKB-KW"/>
</dbReference>
<dbReference type="GO" id="GO:0046872">
    <property type="term" value="F:metal ion binding"/>
    <property type="evidence" value="ECO:0007669"/>
    <property type="project" value="UniProtKB-KW"/>
</dbReference>
<dbReference type="GO" id="GO:0051301">
    <property type="term" value="P:cell division"/>
    <property type="evidence" value="ECO:0007669"/>
    <property type="project" value="InterPro"/>
</dbReference>
<dbReference type="GO" id="GO:0043683">
    <property type="term" value="P:type IV pilus assembly"/>
    <property type="evidence" value="ECO:0000315"/>
    <property type="project" value="PseudoCAP"/>
</dbReference>
<dbReference type="GO" id="GO:0043107">
    <property type="term" value="P:type IV pilus-dependent motility"/>
    <property type="evidence" value="ECO:0000315"/>
    <property type="project" value="PseudoCAP"/>
</dbReference>
<dbReference type="CDD" id="cd24049">
    <property type="entry name" value="ASKHA_NBD_PilM"/>
    <property type="match status" value="1"/>
</dbReference>
<dbReference type="FunFam" id="3.30.1490.300:FF:000001">
    <property type="entry name" value="Type 4 fimbrial biogenesis protein PilM"/>
    <property type="match status" value="1"/>
</dbReference>
<dbReference type="FunFam" id="3.30.420.40:FF:000149">
    <property type="entry name" value="Type IV pilus assembly protein PilM"/>
    <property type="match status" value="1"/>
</dbReference>
<dbReference type="Gene3D" id="3.30.1490.300">
    <property type="match status" value="1"/>
</dbReference>
<dbReference type="Gene3D" id="3.30.420.40">
    <property type="match status" value="2"/>
</dbReference>
<dbReference type="InterPro" id="IPR043129">
    <property type="entry name" value="ATPase_NBD"/>
</dbReference>
<dbReference type="InterPro" id="IPR050696">
    <property type="entry name" value="FtsA/MreB"/>
</dbReference>
<dbReference type="InterPro" id="IPR005883">
    <property type="entry name" value="PilM"/>
</dbReference>
<dbReference type="InterPro" id="IPR003494">
    <property type="entry name" value="SHS2_FtsA"/>
</dbReference>
<dbReference type="NCBIfam" id="TIGR01175">
    <property type="entry name" value="pilM"/>
    <property type="match status" value="1"/>
</dbReference>
<dbReference type="PANTHER" id="PTHR32432">
    <property type="entry name" value="CELL DIVISION PROTEIN FTSA-RELATED"/>
    <property type="match status" value="1"/>
</dbReference>
<dbReference type="PANTHER" id="PTHR32432:SF3">
    <property type="entry name" value="ETHANOLAMINE UTILIZATION PROTEIN EUTJ"/>
    <property type="match status" value="1"/>
</dbReference>
<dbReference type="Pfam" id="PF11104">
    <property type="entry name" value="PilM_2"/>
    <property type="match status" value="1"/>
</dbReference>
<dbReference type="PIRSF" id="PIRSF019169">
    <property type="entry name" value="PilM"/>
    <property type="match status" value="1"/>
</dbReference>
<dbReference type="SMART" id="SM00842">
    <property type="entry name" value="FtsA"/>
    <property type="match status" value="1"/>
</dbReference>
<dbReference type="SUPFAM" id="SSF53067">
    <property type="entry name" value="Actin-like ATPase domain"/>
    <property type="match status" value="2"/>
</dbReference>
<sequence>MLGLIKKKANTLLGIDISSTSVKLLELSRSGGRYKVEAYAVEPLPPNAVVEKNIVELEGVGQALSRVLVKAKTNLKSAVVAVAGSAVITKTIEMEAGLSEDELENQLKIEADQYIPYPLEEVAIDFEVQGLSARNPERVDVLLAACRKENVEVREAALALAGLTAKVVDVEAYALERSYALLSSQLGADTDQLTVAVVDIGATMTTLSVLHNGRTIYTREQLFGGRQLTEEIQRRYGLSVEEAGLAKKQGGLPDDYDSEVLRPFKDAVVQQVSRSLQFFFAAGQFNDVDYIVLAGGTASIQDLDRLIQQKIGTPTLVANPFADMALNGKVNAGALASDAPALMIACGLALRSFD</sequence>
<name>PILM_PSEAE</name>
<organism>
    <name type="scientific">Pseudomonas aeruginosa (strain ATCC 15692 / DSM 22644 / CIP 104116 / JCM 14847 / LMG 12228 / 1C / PRS 101 / PAO1)</name>
    <dbReference type="NCBI Taxonomy" id="208964"/>
    <lineage>
        <taxon>Bacteria</taxon>
        <taxon>Pseudomonadati</taxon>
        <taxon>Pseudomonadota</taxon>
        <taxon>Gammaproteobacteria</taxon>
        <taxon>Pseudomonadales</taxon>
        <taxon>Pseudomonadaceae</taxon>
        <taxon>Pseudomonas</taxon>
    </lineage>
</organism>
<accession>G3XD28</accession>
<keyword id="KW-0002">3D-structure</keyword>
<keyword id="KW-0067">ATP-binding</keyword>
<keyword id="KW-0963">Cytoplasm</keyword>
<keyword id="KW-0460">Magnesium</keyword>
<keyword id="KW-0479">Metal-binding</keyword>
<keyword id="KW-0547">Nucleotide-binding</keyword>
<keyword id="KW-1185">Reference proteome</keyword>
<comment type="function">
    <text evidence="1 2 3">Inner membrane component of the type IV (T4S) secretion system that plays a role in surface and host cell adhesion, colonization, biofilm maturation, virulence, and twitching, a form of surface-associated motility. PilN/PilO heterodimers form the foundation of the inner-membrane PilM/PilN/PilO/PilP complex which plays an essential role in the assembly of a functional T4 pilus (PubMed:19857645, PubMed:19857646). In turn, associates with PilN and facilitates PilM functionally relevant structural changes that differentially impacts PilM binding to PilB, PilT, and PilC (PubMed:27022027).</text>
</comment>
<comment type="subunit">
    <text evidence="1 2 3">Interacts with PilN; this interaction modulates PilM ATP binding site (PubMed:19857645, PubMed:19857646, PubMed:27022027). Interacts with PilP (PubMed:19857645). Interacts with PilO (PubMed:19857645). Interacts with PilB, PilC and PilT (PubMed:27022027).</text>
</comment>
<comment type="subcellular location">
    <subcellularLocation>
        <location evidence="1">Cytoplasm</location>
    </subcellularLocation>
    <text evidence="1">Localizes to the inner membrane through interaction with PilN.</text>
</comment>
<comment type="disruption phenotype">
    <text evidence="1">Deletion mutants lack surface pili.</text>
</comment>
<reference key="1">
    <citation type="journal article" date="2000" name="Nature">
        <title>Complete genome sequence of Pseudomonas aeruginosa PAO1, an opportunistic pathogen.</title>
        <authorList>
            <person name="Stover C.K."/>
            <person name="Pham X.-Q.T."/>
            <person name="Erwin A.L."/>
            <person name="Mizoguchi S.D."/>
            <person name="Warrener P."/>
            <person name="Hickey M.J."/>
            <person name="Brinkman F.S.L."/>
            <person name="Hufnagle W.O."/>
            <person name="Kowalik D.J."/>
            <person name="Lagrou M."/>
            <person name="Garber R.L."/>
            <person name="Goltry L."/>
            <person name="Tolentino E."/>
            <person name="Westbrock-Wadman S."/>
            <person name="Yuan Y."/>
            <person name="Brody L.L."/>
            <person name="Coulter S.N."/>
            <person name="Folger K.R."/>
            <person name="Kas A."/>
            <person name="Larbig K."/>
            <person name="Lim R.M."/>
            <person name="Smith K.A."/>
            <person name="Spencer D.H."/>
            <person name="Wong G.K.-S."/>
            <person name="Wu Z."/>
            <person name="Paulsen I.T."/>
            <person name="Reizer J."/>
            <person name="Saier M.H. Jr."/>
            <person name="Hancock R.E.W."/>
            <person name="Lory S."/>
            <person name="Olson M.V."/>
        </authorList>
    </citation>
    <scope>NUCLEOTIDE SEQUENCE [LARGE SCALE GENOMIC DNA]</scope>
    <source>
        <strain>ATCC 15692 / DSM 22644 / CIP 104116 / JCM 14847 / LMG 12228 / 1C / PRS 101 / PAO1</strain>
    </source>
</reference>
<reference key="2">
    <citation type="journal article" date="2009" name="J. Mol. Biol.">
        <title>PilM/N/O/P proteins form an inner membrane complex that affects the stability of the Pseudomonas aeruginosa type IV pilus secretin.</title>
        <authorList>
            <person name="Ayers M."/>
            <person name="Sampaleanu L.M."/>
            <person name="Tammam S."/>
            <person name="Koo J."/>
            <person name="Harvey H."/>
            <person name="Howell P.L."/>
            <person name="Burrows L.L."/>
        </authorList>
    </citation>
    <scope>FUNCTION</scope>
    <scope>SUBCELLULAR LOCATION</scope>
    <scope>INTERACTION WITH PILN; PILO AND PILP</scope>
    <scope>DISRUPTION PHENOTYPE</scope>
</reference>
<reference key="3">
    <citation type="journal article" date="2009" name="J. Mol. Biol.">
        <title>Periplasmic domains of Pseudomonas aeruginosa PilN and PilO form a stable heterodimeric complex.</title>
        <authorList>
            <person name="Sampaleanu L.M."/>
            <person name="Bonanno J.B."/>
            <person name="Ayers M."/>
            <person name="Koo J."/>
            <person name="Tammam S."/>
            <person name="Burley S.K."/>
            <person name="Almo S.C."/>
            <person name="Burrows L.L."/>
            <person name="Howell P.L."/>
        </authorList>
    </citation>
    <scope>INTERACTION WITH PILN</scope>
</reference>
<reference evidence="5 6 7" key="4">
    <citation type="journal article" date="2016" name="J. Biol. Chem.">
        <title>PilN Binding Modulates the Structure and Binding Partners of the Pseudomonas aeruginosa Type IVa Pilus Protein PilM.</title>
        <authorList>
            <person name="McCallum M."/>
            <person name="Tammam S."/>
            <person name="Little D.J."/>
            <person name="Robinson H."/>
            <person name="Koo J."/>
            <person name="Shah M."/>
            <person name="Calmettes C."/>
            <person name="Moraes T.F."/>
            <person name="Burrows L.L."/>
            <person name="Howell P.L."/>
        </authorList>
    </citation>
    <scope>X-RAY CRYSTALLOGRAPHY (2.40 ANGSTROMS) IN COMPLEX WITH ATP AND MAGNESIUM</scope>
    <scope>INTERACTION WITH PILN; PILB; PILC AND PILT</scope>
</reference>
<gene>
    <name type="primary">pilM</name>
    <name type="ordered locus">PA5044</name>
</gene>